<protein>
    <recommendedName>
        <fullName>Polyadenylate-binding protein 5</fullName>
        <shortName>PABP-5</shortName>
        <shortName>Poly(A)-binding protein 5</shortName>
    </recommendedName>
</protein>
<name>PABP5_HYLLA</name>
<comment type="function">
    <text evidence="1">Binds the poly(A) tail of mRNA. May be involved in cytoplasmic regulatory processes of mRNA metabolism. Can probably bind to cytoplasmic RNA sequences other than poly(A) in vivo (By similarity).</text>
</comment>
<comment type="subcellular location">
    <subcellularLocation>
        <location evidence="1">Cytoplasm</location>
    </subcellularLocation>
</comment>
<organism>
    <name type="scientific">Hylobates lar</name>
    <name type="common">Lar gibbon</name>
    <name type="synonym">White-handed gibbon</name>
    <dbReference type="NCBI Taxonomy" id="9580"/>
    <lineage>
        <taxon>Eukaryota</taxon>
        <taxon>Metazoa</taxon>
        <taxon>Chordata</taxon>
        <taxon>Craniata</taxon>
        <taxon>Vertebrata</taxon>
        <taxon>Euteleostomi</taxon>
        <taxon>Mammalia</taxon>
        <taxon>Eutheria</taxon>
        <taxon>Euarchontoglires</taxon>
        <taxon>Primates</taxon>
        <taxon>Haplorrhini</taxon>
        <taxon>Catarrhini</taxon>
        <taxon>Hylobatidae</taxon>
        <taxon>Hylobates</taxon>
    </lineage>
</organism>
<accession>P60048</accession>
<accession>Q95J70</accession>
<sequence length="382" mass="43331">MGSGEPNPAGKKKKYLKAALYVGDLDPDVTEDMLYKKFRPAGPLRFTRICRDPVTRSPLGYGYVNFRFPADAEWALNTMNFDLINGKPFRLMWSQPDDRLRKSGVGNIFIKNLDKSIDNRALFYLFSAFGNILSCKVVCDDNGSKGYAYVHFDSLAAANRAIWHMNGVRLNNRQVYVGRFKFPEERAAEVRTRDRATFTNVFVKNIGDDIDDEKLKELFCEYGPTESVKVIRDASGKSKGFGFVRYETHEAAQKAVLDLHGKSIDGKVLYVGRAQKKIERLAELRRRFERLRLKEKSRPPGVPIYIKNLDETINDEKLKEEFSSFGSISRAKVMMEVGQGKGFGVVCFSSFEEATKAVDEMNGRIVGSKPLHVTLGQARRRC</sequence>
<reference key="1">
    <citation type="journal article" date="2001" name="Genomics">
        <title>A novel poly(A)-binding protein gene (PABPC5) maps to an X-specific subinterval in the Xq21.3/Yp11.2 homology block of the human sex chromosomes.</title>
        <authorList>
            <person name="Blanco P."/>
            <person name="Sargent C.A."/>
            <person name="Boucher C.A."/>
            <person name="Howell G."/>
            <person name="Ross M."/>
            <person name="Affara N.A."/>
        </authorList>
    </citation>
    <scope>NUCLEOTIDE SEQUENCE [GENOMIC DNA]</scope>
</reference>
<keyword id="KW-0963">Cytoplasm</keyword>
<keyword id="KW-0677">Repeat</keyword>
<keyword id="KW-0694">RNA-binding</keyword>
<feature type="chain" id="PRO_0000081706" description="Polyadenylate-binding protein 5">
    <location>
        <begin position="1"/>
        <end position="382"/>
    </location>
</feature>
<feature type="domain" description="RRM 1" evidence="2">
    <location>
        <begin position="18"/>
        <end position="96"/>
    </location>
</feature>
<feature type="domain" description="RRM 2" evidence="2">
    <location>
        <begin position="106"/>
        <end position="182"/>
    </location>
</feature>
<feature type="domain" description="RRM 3" evidence="2">
    <location>
        <begin position="199"/>
        <end position="276"/>
    </location>
</feature>
<feature type="domain" description="RRM 4" evidence="2">
    <location>
        <begin position="302"/>
        <end position="378"/>
    </location>
</feature>
<evidence type="ECO:0000250" key="1"/>
<evidence type="ECO:0000255" key="2">
    <source>
        <dbReference type="PROSITE-ProRule" id="PRU00176"/>
    </source>
</evidence>
<dbReference type="EMBL" id="AJ299080">
    <property type="protein sequence ID" value="CAC42818.1"/>
    <property type="molecule type" value="Genomic_DNA"/>
</dbReference>
<dbReference type="SMR" id="P60048"/>
<dbReference type="GO" id="GO:0005737">
    <property type="term" value="C:cytoplasm"/>
    <property type="evidence" value="ECO:0007669"/>
    <property type="project" value="UniProtKB-SubCell"/>
</dbReference>
<dbReference type="GO" id="GO:0003723">
    <property type="term" value="F:RNA binding"/>
    <property type="evidence" value="ECO:0007669"/>
    <property type="project" value="UniProtKB-KW"/>
</dbReference>
<dbReference type="CDD" id="cd12378">
    <property type="entry name" value="RRM1_I_PABPs"/>
    <property type="match status" value="1"/>
</dbReference>
<dbReference type="CDD" id="cd12379">
    <property type="entry name" value="RRM2_I_PABPs"/>
    <property type="match status" value="1"/>
</dbReference>
<dbReference type="CDD" id="cd12380">
    <property type="entry name" value="RRM3_I_PABPs"/>
    <property type="match status" value="1"/>
</dbReference>
<dbReference type="FunFam" id="3.30.70.330:FF:000003">
    <property type="entry name" value="Polyadenylate-binding protein"/>
    <property type="match status" value="1"/>
</dbReference>
<dbReference type="FunFam" id="3.30.70.330:FF:000049">
    <property type="entry name" value="Polyadenylate-binding protein"/>
    <property type="match status" value="1"/>
</dbReference>
<dbReference type="FunFam" id="3.30.70.330:FF:000234">
    <property type="entry name" value="Polyadenylate-binding protein 5"/>
    <property type="match status" value="1"/>
</dbReference>
<dbReference type="FunFam" id="3.30.70.330:FF:000338">
    <property type="entry name" value="polyadenylate-binding protein 5"/>
    <property type="match status" value="1"/>
</dbReference>
<dbReference type="Gene3D" id="3.30.70.330">
    <property type="match status" value="4"/>
</dbReference>
<dbReference type="InterPro" id="IPR012677">
    <property type="entry name" value="Nucleotide-bd_a/b_plait_sf"/>
</dbReference>
<dbReference type="InterPro" id="IPR006515">
    <property type="entry name" value="PABP_1234"/>
</dbReference>
<dbReference type="InterPro" id="IPR034364">
    <property type="entry name" value="PABP_RRM1"/>
</dbReference>
<dbReference type="InterPro" id="IPR035979">
    <property type="entry name" value="RBD_domain_sf"/>
</dbReference>
<dbReference type="InterPro" id="IPR045305">
    <property type="entry name" value="RRM2_I_PABPs"/>
</dbReference>
<dbReference type="InterPro" id="IPR000504">
    <property type="entry name" value="RRM_dom"/>
</dbReference>
<dbReference type="InterPro" id="IPR003954">
    <property type="entry name" value="RRM_dom_euk"/>
</dbReference>
<dbReference type="NCBIfam" id="TIGR01628">
    <property type="entry name" value="PABP-1234"/>
    <property type="match status" value="1"/>
</dbReference>
<dbReference type="PANTHER" id="PTHR24012">
    <property type="entry name" value="RNA BINDING PROTEIN"/>
    <property type="match status" value="1"/>
</dbReference>
<dbReference type="Pfam" id="PF00076">
    <property type="entry name" value="RRM_1"/>
    <property type="match status" value="4"/>
</dbReference>
<dbReference type="SMART" id="SM00360">
    <property type="entry name" value="RRM"/>
    <property type="match status" value="4"/>
</dbReference>
<dbReference type="SMART" id="SM00361">
    <property type="entry name" value="RRM_1"/>
    <property type="match status" value="3"/>
</dbReference>
<dbReference type="SUPFAM" id="SSF54928">
    <property type="entry name" value="RNA-binding domain, RBD"/>
    <property type="match status" value="2"/>
</dbReference>
<dbReference type="PROSITE" id="PS50102">
    <property type="entry name" value="RRM"/>
    <property type="match status" value="4"/>
</dbReference>
<gene>
    <name type="primary">PABPC5</name>
    <name type="synonym">PABP5</name>
</gene>
<proteinExistence type="inferred from homology"/>